<keyword id="KW-0067">ATP-binding</keyword>
<keyword id="KW-0347">Helicase</keyword>
<keyword id="KW-0378">Hydrolase</keyword>
<keyword id="KW-0547">Nucleotide-binding</keyword>
<keyword id="KW-0539">Nucleus</keyword>
<keyword id="KW-1185">Reference proteome</keyword>
<keyword id="KW-0690">Ribosome biogenesis</keyword>
<keyword id="KW-0694">RNA-binding</keyword>
<keyword id="KW-0698">rRNA processing</keyword>
<organism>
    <name type="scientific">Kluyveromyces lactis (strain ATCC 8585 / CBS 2359 / DSM 70799 / NBRC 1267 / NRRL Y-1140 / WM37)</name>
    <name type="common">Yeast</name>
    <name type="synonym">Candida sphaerica</name>
    <dbReference type="NCBI Taxonomy" id="284590"/>
    <lineage>
        <taxon>Eukaryota</taxon>
        <taxon>Fungi</taxon>
        <taxon>Dikarya</taxon>
        <taxon>Ascomycota</taxon>
        <taxon>Saccharomycotina</taxon>
        <taxon>Saccharomycetes</taxon>
        <taxon>Saccharomycetales</taxon>
        <taxon>Saccharomycetaceae</taxon>
        <taxon>Kluyveromyces</taxon>
    </lineage>
</organism>
<sequence>MAGNKRVRDAESEQDHAETETVVKDTATTGEVEGSFSDLKLSDGTMKAIGKMGFTQMTAVQTRTIPPLLAGKDVLGAAKTGSGKTLAFLIPAIEMLHSLKFKPRNGTGVIVITPTRELALQIFGVARELMEFHSQTFGIVIGGANRRQEADKLMKGVNILIATPGRLLDHLQNTKGFIFKNLKALVIDEADRILEIGFEDEMRQIIKILPNEDRQSMLFSATQTTKVEDLARISLRPGPLFINVDSEKDTSTADGLEQGYVVCESDKRFLLLFSFLKRNQKKKVIVFLSSCNSVKYYAELLNYIDLPVLELHGKQKQQKRTNTFFEFCNAERGILVCTDVAARGLDIPAVDWIIQFDPPDDPRDYIHRVGRTARGTKGKGKSLMFLTPTELGFLRYLKAAKVPLNEYEFPTNKIANVQAQLEKLIKSNYYLHQIAKDGYRSYLQAYASHSLKTVYQIDKLDLAKVAKSYGFPVPPKVNITIGASGKTPATKKRRTKD</sequence>
<protein>
    <recommendedName>
        <fullName>ATP-dependent RNA helicase HAS1</fullName>
        <ecNumber>3.6.4.13</ecNumber>
    </recommendedName>
</protein>
<reference key="1">
    <citation type="journal article" date="2004" name="Nature">
        <title>Genome evolution in yeasts.</title>
        <authorList>
            <person name="Dujon B."/>
            <person name="Sherman D."/>
            <person name="Fischer G."/>
            <person name="Durrens P."/>
            <person name="Casaregola S."/>
            <person name="Lafontaine I."/>
            <person name="de Montigny J."/>
            <person name="Marck C."/>
            <person name="Neuveglise C."/>
            <person name="Talla E."/>
            <person name="Goffard N."/>
            <person name="Frangeul L."/>
            <person name="Aigle M."/>
            <person name="Anthouard V."/>
            <person name="Babour A."/>
            <person name="Barbe V."/>
            <person name="Barnay S."/>
            <person name="Blanchin S."/>
            <person name="Beckerich J.-M."/>
            <person name="Beyne E."/>
            <person name="Bleykasten C."/>
            <person name="Boisrame A."/>
            <person name="Boyer J."/>
            <person name="Cattolico L."/>
            <person name="Confanioleri F."/>
            <person name="de Daruvar A."/>
            <person name="Despons L."/>
            <person name="Fabre E."/>
            <person name="Fairhead C."/>
            <person name="Ferry-Dumazet H."/>
            <person name="Groppi A."/>
            <person name="Hantraye F."/>
            <person name="Hennequin C."/>
            <person name="Jauniaux N."/>
            <person name="Joyet P."/>
            <person name="Kachouri R."/>
            <person name="Kerrest A."/>
            <person name="Koszul R."/>
            <person name="Lemaire M."/>
            <person name="Lesur I."/>
            <person name="Ma L."/>
            <person name="Muller H."/>
            <person name="Nicaud J.-M."/>
            <person name="Nikolski M."/>
            <person name="Oztas S."/>
            <person name="Ozier-Kalogeropoulos O."/>
            <person name="Pellenz S."/>
            <person name="Potier S."/>
            <person name="Richard G.-F."/>
            <person name="Straub M.-L."/>
            <person name="Suleau A."/>
            <person name="Swennen D."/>
            <person name="Tekaia F."/>
            <person name="Wesolowski-Louvel M."/>
            <person name="Westhof E."/>
            <person name="Wirth B."/>
            <person name="Zeniou-Meyer M."/>
            <person name="Zivanovic Y."/>
            <person name="Bolotin-Fukuhara M."/>
            <person name="Thierry A."/>
            <person name="Bouchier C."/>
            <person name="Caudron B."/>
            <person name="Scarpelli C."/>
            <person name="Gaillardin C."/>
            <person name="Weissenbach J."/>
            <person name="Wincker P."/>
            <person name="Souciet J.-L."/>
        </authorList>
    </citation>
    <scope>NUCLEOTIDE SEQUENCE [LARGE SCALE GENOMIC DNA]</scope>
    <source>
        <strain>ATCC 8585 / CBS 2359 / DSM 70799 / NBRC 1267 / NRRL Y-1140 / WM37</strain>
    </source>
</reference>
<feature type="chain" id="PRO_0000232213" description="ATP-dependent RNA helicase HAS1">
    <location>
        <begin position="1"/>
        <end position="497"/>
    </location>
</feature>
<feature type="domain" description="Helicase ATP-binding" evidence="2">
    <location>
        <begin position="65"/>
        <end position="241"/>
    </location>
</feature>
<feature type="domain" description="Helicase C-terminal" evidence="3">
    <location>
        <begin position="255"/>
        <end position="425"/>
    </location>
</feature>
<feature type="region of interest" description="Disordered" evidence="4">
    <location>
        <begin position="1"/>
        <end position="23"/>
    </location>
</feature>
<feature type="short sequence motif" description="Q motif">
    <location>
        <begin position="34"/>
        <end position="62"/>
    </location>
</feature>
<feature type="short sequence motif" description="DEAD box">
    <location>
        <begin position="188"/>
        <end position="191"/>
    </location>
</feature>
<feature type="short sequence motif" description="Bipartite nuclear localization signal" evidence="1">
    <location>
        <begin position="267"/>
        <end position="283"/>
    </location>
</feature>
<feature type="binding site" evidence="2">
    <location>
        <begin position="78"/>
        <end position="85"/>
    </location>
    <ligand>
        <name>ATP</name>
        <dbReference type="ChEBI" id="CHEBI:30616"/>
    </ligand>
</feature>
<comment type="function">
    <text>ATP-dependent RNA helicase involved in 40S ribosomal subunit biogenesis. Required for the processing and cleavage of 35S pre-rRNA at sites A0, A1, and A2, leading to mature 18S rRNA.</text>
</comment>
<comment type="catalytic activity">
    <reaction>
        <text>ATP + H2O = ADP + phosphate + H(+)</text>
        <dbReference type="Rhea" id="RHEA:13065"/>
        <dbReference type="ChEBI" id="CHEBI:15377"/>
        <dbReference type="ChEBI" id="CHEBI:15378"/>
        <dbReference type="ChEBI" id="CHEBI:30616"/>
        <dbReference type="ChEBI" id="CHEBI:43474"/>
        <dbReference type="ChEBI" id="CHEBI:456216"/>
        <dbReference type="EC" id="3.6.4.13"/>
    </reaction>
</comment>
<comment type="subunit">
    <text evidence="1">Associates in the nucleolus with the 60S and pre-60S ribosomal subunits.</text>
</comment>
<comment type="subcellular location">
    <subcellularLocation>
        <location evidence="1">Nucleus</location>
        <location evidence="1">Nucleolus</location>
    </subcellularLocation>
</comment>
<comment type="domain">
    <text>The Q motif is unique to and characteristic of the DEAD box family of RNA helicases and controls ATP binding and hydrolysis.</text>
</comment>
<comment type="similarity">
    <text evidence="5">Belongs to the DEAD box helicase family. DDX18/HAS1 subfamily.</text>
</comment>
<dbReference type="EC" id="3.6.4.13"/>
<dbReference type="EMBL" id="CR382121">
    <property type="protein sequence ID" value="CAH03010.1"/>
    <property type="molecule type" value="Genomic_DNA"/>
</dbReference>
<dbReference type="RefSeq" id="XP_451422.1">
    <property type="nucleotide sequence ID" value="XM_451422.1"/>
</dbReference>
<dbReference type="SMR" id="Q6CXB7"/>
<dbReference type="FunCoup" id="Q6CXB7">
    <property type="interactions" value="1309"/>
</dbReference>
<dbReference type="STRING" id="284590.Q6CXB7"/>
<dbReference type="PaxDb" id="284590-Q6CXB7"/>
<dbReference type="KEGG" id="kla:KLLA0_A09669g"/>
<dbReference type="eggNOG" id="KOG0342">
    <property type="taxonomic scope" value="Eukaryota"/>
</dbReference>
<dbReference type="HOGENOM" id="CLU_003041_26_5_1"/>
<dbReference type="InParanoid" id="Q6CXB7"/>
<dbReference type="OMA" id="LMEFHSQ"/>
<dbReference type="Proteomes" id="UP000000598">
    <property type="component" value="Chromosome A"/>
</dbReference>
<dbReference type="GO" id="GO:0005730">
    <property type="term" value="C:nucleolus"/>
    <property type="evidence" value="ECO:0007669"/>
    <property type="project" value="UniProtKB-SubCell"/>
</dbReference>
<dbReference type="GO" id="GO:0005524">
    <property type="term" value="F:ATP binding"/>
    <property type="evidence" value="ECO:0007669"/>
    <property type="project" value="UniProtKB-KW"/>
</dbReference>
<dbReference type="GO" id="GO:0016887">
    <property type="term" value="F:ATP hydrolysis activity"/>
    <property type="evidence" value="ECO:0007669"/>
    <property type="project" value="RHEA"/>
</dbReference>
<dbReference type="GO" id="GO:0003723">
    <property type="term" value="F:RNA binding"/>
    <property type="evidence" value="ECO:0007669"/>
    <property type="project" value="UniProtKB-KW"/>
</dbReference>
<dbReference type="GO" id="GO:0003724">
    <property type="term" value="F:RNA helicase activity"/>
    <property type="evidence" value="ECO:0007669"/>
    <property type="project" value="UniProtKB-EC"/>
</dbReference>
<dbReference type="GO" id="GO:0006364">
    <property type="term" value="P:rRNA processing"/>
    <property type="evidence" value="ECO:0007669"/>
    <property type="project" value="UniProtKB-KW"/>
</dbReference>
<dbReference type="CDD" id="cd17942">
    <property type="entry name" value="DEADc_DDX18"/>
    <property type="match status" value="1"/>
</dbReference>
<dbReference type="CDD" id="cd18787">
    <property type="entry name" value="SF2_C_DEAD"/>
    <property type="match status" value="1"/>
</dbReference>
<dbReference type="FunFam" id="3.40.50.300:FF:000379">
    <property type="entry name" value="RNA helicase"/>
    <property type="match status" value="1"/>
</dbReference>
<dbReference type="FunFam" id="3.40.50.300:FF:000460">
    <property type="entry name" value="RNA helicase"/>
    <property type="match status" value="1"/>
</dbReference>
<dbReference type="Gene3D" id="3.40.50.300">
    <property type="entry name" value="P-loop containing nucleotide triphosphate hydrolases"/>
    <property type="match status" value="2"/>
</dbReference>
<dbReference type="InterPro" id="IPR044773">
    <property type="entry name" value="DDX18/Has1_DEADc"/>
</dbReference>
<dbReference type="InterPro" id="IPR011545">
    <property type="entry name" value="DEAD/DEAH_box_helicase_dom"/>
</dbReference>
<dbReference type="InterPro" id="IPR014001">
    <property type="entry name" value="Helicase_ATP-bd"/>
</dbReference>
<dbReference type="InterPro" id="IPR001650">
    <property type="entry name" value="Helicase_C-like"/>
</dbReference>
<dbReference type="InterPro" id="IPR027417">
    <property type="entry name" value="P-loop_NTPase"/>
</dbReference>
<dbReference type="InterPro" id="IPR000629">
    <property type="entry name" value="RNA-helicase_DEAD-box_CS"/>
</dbReference>
<dbReference type="InterPro" id="IPR014014">
    <property type="entry name" value="RNA_helicase_DEAD_Q_motif"/>
</dbReference>
<dbReference type="InterPro" id="IPR025313">
    <property type="entry name" value="SPB4-like_CTE"/>
</dbReference>
<dbReference type="PANTHER" id="PTHR24031">
    <property type="entry name" value="RNA HELICASE"/>
    <property type="match status" value="1"/>
</dbReference>
<dbReference type="Pfam" id="PF13959">
    <property type="entry name" value="CTE_SPB4"/>
    <property type="match status" value="1"/>
</dbReference>
<dbReference type="Pfam" id="PF00270">
    <property type="entry name" value="DEAD"/>
    <property type="match status" value="1"/>
</dbReference>
<dbReference type="Pfam" id="PF00271">
    <property type="entry name" value="Helicase_C"/>
    <property type="match status" value="1"/>
</dbReference>
<dbReference type="SMART" id="SM00487">
    <property type="entry name" value="DEXDc"/>
    <property type="match status" value="1"/>
</dbReference>
<dbReference type="SMART" id="SM01178">
    <property type="entry name" value="DUF4217"/>
    <property type="match status" value="1"/>
</dbReference>
<dbReference type="SMART" id="SM00490">
    <property type="entry name" value="HELICc"/>
    <property type="match status" value="1"/>
</dbReference>
<dbReference type="SUPFAM" id="SSF52540">
    <property type="entry name" value="P-loop containing nucleoside triphosphate hydrolases"/>
    <property type="match status" value="1"/>
</dbReference>
<dbReference type="PROSITE" id="PS00039">
    <property type="entry name" value="DEAD_ATP_HELICASE"/>
    <property type="match status" value="1"/>
</dbReference>
<dbReference type="PROSITE" id="PS51192">
    <property type="entry name" value="HELICASE_ATP_BIND_1"/>
    <property type="match status" value="1"/>
</dbReference>
<dbReference type="PROSITE" id="PS51194">
    <property type="entry name" value="HELICASE_CTER"/>
    <property type="match status" value="1"/>
</dbReference>
<dbReference type="PROSITE" id="PS51195">
    <property type="entry name" value="Q_MOTIF"/>
    <property type="match status" value="1"/>
</dbReference>
<evidence type="ECO:0000250" key="1"/>
<evidence type="ECO:0000255" key="2">
    <source>
        <dbReference type="PROSITE-ProRule" id="PRU00541"/>
    </source>
</evidence>
<evidence type="ECO:0000255" key="3">
    <source>
        <dbReference type="PROSITE-ProRule" id="PRU00542"/>
    </source>
</evidence>
<evidence type="ECO:0000256" key="4">
    <source>
        <dbReference type="SAM" id="MobiDB-lite"/>
    </source>
</evidence>
<evidence type="ECO:0000305" key="5"/>
<name>HAS1_KLULA</name>
<proteinExistence type="inferred from homology"/>
<accession>Q6CXB7</accession>
<gene>
    <name type="primary">HAS1</name>
    <name type="ordered locus">KLLA0A09669g</name>
</gene>